<feature type="chain" id="PRO_0000386129" description="GTPase Obg">
    <location>
        <begin position="1"/>
        <end position="394"/>
    </location>
</feature>
<feature type="domain" description="Obg" evidence="2">
    <location>
        <begin position="5"/>
        <end position="163"/>
    </location>
</feature>
<feature type="domain" description="OBG-type G" evidence="1">
    <location>
        <begin position="164"/>
        <end position="330"/>
    </location>
</feature>
<feature type="region of interest" description="Disordered" evidence="3">
    <location>
        <begin position="26"/>
        <end position="45"/>
    </location>
</feature>
<feature type="binding site" evidence="1">
    <location>
        <begin position="170"/>
        <end position="177"/>
    </location>
    <ligand>
        <name>GTP</name>
        <dbReference type="ChEBI" id="CHEBI:37565"/>
    </ligand>
</feature>
<feature type="binding site" evidence="1">
    <location>
        <position position="177"/>
    </location>
    <ligand>
        <name>Mg(2+)</name>
        <dbReference type="ChEBI" id="CHEBI:18420"/>
    </ligand>
</feature>
<feature type="binding site" evidence="1">
    <location>
        <begin position="195"/>
        <end position="199"/>
    </location>
    <ligand>
        <name>GTP</name>
        <dbReference type="ChEBI" id="CHEBI:37565"/>
    </ligand>
</feature>
<feature type="binding site" evidence="1">
    <location>
        <position position="197"/>
    </location>
    <ligand>
        <name>Mg(2+)</name>
        <dbReference type="ChEBI" id="CHEBI:18420"/>
    </ligand>
</feature>
<feature type="binding site" evidence="1">
    <location>
        <begin position="217"/>
        <end position="220"/>
    </location>
    <ligand>
        <name>GTP</name>
        <dbReference type="ChEBI" id="CHEBI:37565"/>
    </ligand>
</feature>
<feature type="binding site" evidence="1">
    <location>
        <begin position="284"/>
        <end position="287"/>
    </location>
    <ligand>
        <name>GTP</name>
        <dbReference type="ChEBI" id="CHEBI:37565"/>
    </ligand>
</feature>
<feature type="binding site" evidence="1">
    <location>
        <begin position="311"/>
        <end position="313"/>
    </location>
    <ligand>
        <name>GTP</name>
        <dbReference type="ChEBI" id="CHEBI:37565"/>
    </ligand>
</feature>
<reference key="1">
    <citation type="journal article" date="2003" name="J. Bacteriol.">
        <title>Complete genome sequence of the oral pathogenic bacterium Porphyromonas gingivalis strain W83.</title>
        <authorList>
            <person name="Nelson K.E."/>
            <person name="Fleischmann R.D."/>
            <person name="DeBoy R.T."/>
            <person name="Paulsen I.T."/>
            <person name="Fouts D.E."/>
            <person name="Eisen J.A."/>
            <person name="Daugherty S.C."/>
            <person name="Dodson R.J."/>
            <person name="Durkin A.S."/>
            <person name="Gwinn M.L."/>
            <person name="Haft D.H."/>
            <person name="Kolonay J.F."/>
            <person name="Nelson W.C."/>
            <person name="Mason T.M."/>
            <person name="Tallon L."/>
            <person name="Gray J."/>
            <person name="Granger D."/>
            <person name="Tettelin H."/>
            <person name="Dong H."/>
            <person name="Galvin J.L."/>
            <person name="Duncan M.J."/>
            <person name="Dewhirst F.E."/>
            <person name="Fraser C.M."/>
        </authorList>
    </citation>
    <scope>NUCLEOTIDE SEQUENCE [LARGE SCALE GENOMIC DNA]</scope>
    <source>
        <strain>ATCC BAA-308 / W83</strain>
    </source>
</reference>
<keyword id="KW-0963">Cytoplasm</keyword>
<keyword id="KW-0342">GTP-binding</keyword>
<keyword id="KW-0378">Hydrolase</keyword>
<keyword id="KW-0460">Magnesium</keyword>
<keyword id="KW-0479">Metal-binding</keyword>
<keyword id="KW-0547">Nucleotide-binding</keyword>
<keyword id="KW-1185">Reference proteome</keyword>
<comment type="function">
    <text evidence="1">An essential GTPase which binds GTP, GDP and possibly (p)ppGpp with moderate affinity, with high nucleotide exchange rates and a fairly low GTP hydrolysis rate. Plays a role in control of the cell cycle, stress response, ribosome biogenesis and in those bacteria that undergo differentiation, in morphogenesis control.</text>
</comment>
<comment type="cofactor">
    <cofactor evidence="1">
        <name>Mg(2+)</name>
        <dbReference type="ChEBI" id="CHEBI:18420"/>
    </cofactor>
</comment>
<comment type="subunit">
    <text evidence="1">Monomer.</text>
</comment>
<comment type="subcellular location">
    <subcellularLocation>
        <location evidence="1">Cytoplasm</location>
    </subcellularLocation>
</comment>
<comment type="similarity">
    <text evidence="1">Belongs to the TRAFAC class OBG-HflX-like GTPase superfamily. OBG GTPase family.</text>
</comment>
<sequence length="394" mass="43601">MAAESNFVDYVKIYCRSGKGGRGSTHFRREKYIPKGGPDGGDGGRGGHVFLRGNRNYWTLLHLRYDRHIMATNGQSGGAKRSTGANGEDRIIEVPCGTAVYDADTGEFITDITEHGQQVMLLQGGRGGHGNTFFKTATNQAPRYAQPGEPAQERMVIMQLKMLADVGLVGFPNAGKSTLLSVLTAAKPKIANYPFTTLEPNLGIVAYRDKRSFVMADIPGIIEGASSGKGLGLRFLRHIERNALLLFMIPADTDNIAKEYEILSRELVAYNEELAQKRKVLAITKCDLIDEELCEMLREELPTGLPVVFISAVAQQGLEELKDTLWKELSKETLHEPDSIVRQALDLTSLTWDEEDDLFPASIEDDEDEEGLDDIDFDLEIEYDNEGDDAPDQL</sequence>
<organism>
    <name type="scientific">Porphyromonas gingivalis (strain ATCC BAA-308 / W83)</name>
    <dbReference type="NCBI Taxonomy" id="242619"/>
    <lineage>
        <taxon>Bacteria</taxon>
        <taxon>Pseudomonadati</taxon>
        <taxon>Bacteroidota</taxon>
        <taxon>Bacteroidia</taxon>
        <taxon>Bacteroidales</taxon>
        <taxon>Porphyromonadaceae</taxon>
        <taxon>Porphyromonas</taxon>
    </lineage>
</organism>
<gene>
    <name evidence="1" type="primary">obg</name>
    <name type="ordered locus">PG_0790</name>
</gene>
<dbReference type="EC" id="3.6.5.-" evidence="1"/>
<dbReference type="EMBL" id="AE015924">
    <property type="protein sequence ID" value="AAQ65951.1"/>
    <property type="molecule type" value="Genomic_DNA"/>
</dbReference>
<dbReference type="SMR" id="Q7MW55"/>
<dbReference type="STRING" id="242619.PG_0790"/>
<dbReference type="EnsemblBacteria" id="AAQ65951">
    <property type="protein sequence ID" value="AAQ65951"/>
    <property type="gene ID" value="PG_0790"/>
</dbReference>
<dbReference type="KEGG" id="pgi:PG_0790"/>
<dbReference type="eggNOG" id="COG0536">
    <property type="taxonomic scope" value="Bacteria"/>
</dbReference>
<dbReference type="HOGENOM" id="CLU_011747_2_3_10"/>
<dbReference type="Proteomes" id="UP000000588">
    <property type="component" value="Chromosome"/>
</dbReference>
<dbReference type="GO" id="GO:0005737">
    <property type="term" value="C:cytoplasm"/>
    <property type="evidence" value="ECO:0007669"/>
    <property type="project" value="UniProtKB-SubCell"/>
</dbReference>
<dbReference type="GO" id="GO:0005525">
    <property type="term" value="F:GTP binding"/>
    <property type="evidence" value="ECO:0007669"/>
    <property type="project" value="UniProtKB-UniRule"/>
</dbReference>
<dbReference type="GO" id="GO:0003924">
    <property type="term" value="F:GTPase activity"/>
    <property type="evidence" value="ECO:0007669"/>
    <property type="project" value="UniProtKB-UniRule"/>
</dbReference>
<dbReference type="GO" id="GO:0000287">
    <property type="term" value="F:magnesium ion binding"/>
    <property type="evidence" value="ECO:0007669"/>
    <property type="project" value="InterPro"/>
</dbReference>
<dbReference type="GO" id="GO:0042254">
    <property type="term" value="P:ribosome biogenesis"/>
    <property type="evidence" value="ECO:0007669"/>
    <property type="project" value="UniProtKB-UniRule"/>
</dbReference>
<dbReference type="CDD" id="cd01898">
    <property type="entry name" value="Obg"/>
    <property type="match status" value="1"/>
</dbReference>
<dbReference type="FunFam" id="2.70.210.12:FF:000001">
    <property type="entry name" value="GTPase Obg"/>
    <property type="match status" value="1"/>
</dbReference>
<dbReference type="Gene3D" id="2.70.210.12">
    <property type="entry name" value="GTP1/OBG domain"/>
    <property type="match status" value="1"/>
</dbReference>
<dbReference type="Gene3D" id="3.40.50.300">
    <property type="entry name" value="P-loop containing nucleotide triphosphate hydrolases"/>
    <property type="match status" value="1"/>
</dbReference>
<dbReference type="HAMAP" id="MF_01454">
    <property type="entry name" value="GTPase_Obg"/>
    <property type="match status" value="1"/>
</dbReference>
<dbReference type="InterPro" id="IPR031167">
    <property type="entry name" value="G_OBG"/>
</dbReference>
<dbReference type="InterPro" id="IPR006073">
    <property type="entry name" value="GTP-bd"/>
</dbReference>
<dbReference type="InterPro" id="IPR014100">
    <property type="entry name" value="GTP-bd_Obg/CgtA"/>
</dbReference>
<dbReference type="InterPro" id="IPR006074">
    <property type="entry name" value="GTP1-OBG_CS"/>
</dbReference>
<dbReference type="InterPro" id="IPR006169">
    <property type="entry name" value="GTP1_OBG_dom"/>
</dbReference>
<dbReference type="InterPro" id="IPR036726">
    <property type="entry name" value="GTP1_OBG_dom_sf"/>
</dbReference>
<dbReference type="InterPro" id="IPR045086">
    <property type="entry name" value="OBG_GTPase"/>
</dbReference>
<dbReference type="InterPro" id="IPR027417">
    <property type="entry name" value="P-loop_NTPase"/>
</dbReference>
<dbReference type="NCBIfam" id="TIGR02729">
    <property type="entry name" value="Obg_CgtA"/>
    <property type="match status" value="1"/>
</dbReference>
<dbReference type="NCBIfam" id="NF008955">
    <property type="entry name" value="PRK12297.1"/>
    <property type="match status" value="1"/>
</dbReference>
<dbReference type="NCBIfam" id="NF008956">
    <property type="entry name" value="PRK12299.1"/>
    <property type="match status" value="1"/>
</dbReference>
<dbReference type="PANTHER" id="PTHR11702">
    <property type="entry name" value="DEVELOPMENTALLY REGULATED GTP-BINDING PROTEIN-RELATED"/>
    <property type="match status" value="1"/>
</dbReference>
<dbReference type="PANTHER" id="PTHR11702:SF31">
    <property type="entry name" value="MITOCHONDRIAL RIBOSOME-ASSOCIATED GTPASE 2"/>
    <property type="match status" value="1"/>
</dbReference>
<dbReference type="Pfam" id="PF01018">
    <property type="entry name" value="GTP1_OBG"/>
    <property type="match status" value="1"/>
</dbReference>
<dbReference type="Pfam" id="PF01926">
    <property type="entry name" value="MMR_HSR1"/>
    <property type="match status" value="1"/>
</dbReference>
<dbReference type="PIRSF" id="PIRSF002401">
    <property type="entry name" value="GTP_bd_Obg/CgtA"/>
    <property type="match status" value="1"/>
</dbReference>
<dbReference type="PRINTS" id="PR00326">
    <property type="entry name" value="GTP1OBG"/>
</dbReference>
<dbReference type="SUPFAM" id="SSF82051">
    <property type="entry name" value="Obg GTP-binding protein N-terminal domain"/>
    <property type="match status" value="1"/>
</dbReference>
<dbReference type="SUPFAM" id="SSF52540">
    <property type="entry name" value="P-loop containing nucleoside triphosphate hydrolases"/>
    <property type="match status" value="1"/>
</dbReference>
<dbReference type="PROSITE" id="PS51710">
    <property type="entry name" value="G_OBG"/>
    <property type="match status" value="1"/>
</dbReference>
<dbReference type="PROSITE" id="PS00905">
    <property type="entry name" value="GTP1_OBG"/>
    <property type="match status" value="1"/>
</dbReference>
<dbReference type="PROSITE" id="PS51883">
    <property type="entry name" value="OBG"/>
    <property type="match status" value="1"/>
</dbReference>
<accession>Q7MW55</accession>
<evidence type="ECO:0000255" key="1">
    <source>
        <dbReference type="HAMAP-Rule" id="MF_01454"/>
    </source>
</evidence>
<evidence type="ECO:0000255" key="2">
    <source>
        <dbReference type="PROSITE-ProRule" id="PRU01231"/>
    </source>
</evidence>
<evidence type="ECO:0000256" key="3">
    <source>
        <dbReference type="SAM" id="MobiDB-lite"/>
    </source>
</evidence>
<proteinExistence type="inferred from homology"/>
<name>OBG_PORGI</name>
<protein>
    <recommendedName>
        <fullName evidence="1">GTPase Obg</fullName>
        <ecNumber evidence="1">3.6.5.-</ecNumber>
    </recommendedName>
    <alternativeName>
        <fullName evidence="1">GTP-binding protein Obg</fullName>
    </alternativeName>
</protein>